<comment type="function">
    <text evidence="1">Catalyzes the conversion of D-ribulose 5-phosphate to formate and 3,4-dihydroxy-2-butanone 4-phosphate.</text>
</comment>
<comment type="catalytic activity">
    <reaction evidence="1">
        <text>D-ribulose 5-phosphate = (2S)-2-hydroxy-3-oxobutyl phosphate + formate + H(+)</text>
        <dbReference type="Rhea" id="RHEA:18457"/>
        <dbReference type="ChEBI" id="CHEBI:15378"/>
        <dbReference type="ChEBI" id="CHEBI:15740"/>
        <dbReference type="ChEBI" id="CHEBI:58121"/>
        <dbReference type="ChEBI" id="CHEBI:58830"/>
        <dbReference type="EC" id="4.1.99.12"/>
    </reaction>
</comment>
<comment type="cofactor">
    <cofactor evidence="1">
        <name>Mg(2+)</name>
        <dbReference type="ChEBI" id="CHEBI:18420"/>
    </cofactor>
    <cofactor evidence="1">
        <name>Mn(2+)</name>
        <dbReference type="ChEBI" id="CHEBI:29035"/>
    </cofactor>
    <text evidence="1">Binds 2 divalent metal cations per subunit. Magnesium or manganese.</text>
</comment>
<comment type="pathway">
    <text evidence="1">Cofactor biosynthesis; riboflavin biosynthesis; 2-hydroxy-3-oxobutyl phosphate from D-ribulose 5-phosphate: step 1/1.</text>
</comment>
<comment type="subunit">
    <text evidence="1">Homodimer.</text>
</comment>
<comment type="similarity">
    <text evidence="1">Belongs to the DHBP synthase family.</text>
</comment>
<proteinExistence type="inferred from homology"/>
<gene>
    <name evidence="1" type="primary">ribB</name>
    <name type="ordered locus">KPN78578_33890</name>
    <name type="ORF">KPN_03454</name>
</gene>
<organism>
    <name type="scientific">Klebsiella pneumoniae subsp. pneumoniae (strain ATCC 700721 / MGH 78578)</name>
    <dbReference type="NCBI Taxonomy" id="272620"/>
    <lineage>
        <taxon>Bacteria</taxon>
        <taxon>Pseudomonadati</taxon>
        <taxon>Pseudomonadota</taxon>
        <taxon>Gammaproteobacteria</taxon>
        <taxon>Enterobacterales</taxon>
        <taxon>Enterobacteriaceae</taxon>
        <taxon>Klebsiella/Raoultella group</taxon>
        <taxon>Klebsiella</taxon>
        <taxon>Klebsiella pneumoniae complex</taxon>
    </lineage>
</organism>
<accession>A6TE29</accession>
<dbReference type="EC" id="4.1.99.12" evidence="1"/>
<dbReference type="EMBL" id="CP000647">
    <property type="protein sequence ID" value="ABR78850.1"/>
    <property type="molecule type" value="Genomic_DNA"/>
</dbReference>
<dbReference type="RefSeq" id="WP_004185664.1">
    <property type="nucleotide sequence ID" value="NC_009648.1"/>
</dbReference>
<dbReference type="SMR" id="A6TE29"/>
<dbReference type="STRING" id="272620.KPN_03454"/>
<dbReference type="jPOST" id="A6TE29"/>
<dbReference type="PaxDb" id="272620-KPN_03454"/>
<dbReference type="EnsemblBacteria" id="ABR78850">
    <property type="protein sequence ID" value="ABR78850"/>
    <property type="gene ID" value="KPN_03454"/>
</dbReference>
<dbReference type="KEGG" id="kpn:KPN_03454"/>
<dbReference type="HOGENOM" id="CLU_020273_3_0_6"/>
<dbReference type="UniPathway" id="UPA00275">
    <property type="reaction ID" value="UER00399"/>
</dbReference>
<dbReference type="Proteomes" id="UP000000265">
    <property type="component" value="Chromosome"/>
</dbReference>
<dbReference type="GO" id="GO:0005829">
    <property type="term" value="C:cytosol"/>
    <property type="evidence" value="ECO:0007669"/>
    <property type="project" value="TreeGrafter"/>
</dbReference>
<dbReference type="GO" id="GO:0008686">
    <property type="term" value="F:3,4-dihydroxy-2-butanone-4-phosphate synthase activity"/>
    <property type="evidence" value="ECO:0007669"/>
    <property type="project" value="UniProtKB-UniRule"/>
</dbReference>
<dbReference type="GO" id="GO:0000287">
    <property type="term" value="F:magnesium ion binding"/>
    <property type="evidence" value="ECO:0007669"/>
    <property type="project" value="UniProtKB-UniRule"/>
</dbReference>
<dbReference type="GO" id="GO:0030145">
    <property type="term" value="F:manganese ion binding"/>
    <property type="evidence" value="ECO:0007669"/>
    <property type="project" value="UniProtKB-UniRule"/>
</dbReference>
<dbReference type="GO" id="GO:0009231">
    <property type="term" value="P:riboflavin biosynthetic process"/>
    <property type="evidence" value="ECO:0007669"/>
    <property type="project" value="UniProtKB-UniRule"/>
</dbReference>
<dbReference type="FunFam" id="3.90.870.10:FF:000002">
    <property type="entry name" value="3,4-dihydroxy-2-butanone 4-phosphate synthase"/>
    <property type="match status" value="1"/>
</dbReference>
<dbReference type="Gene3D" id="3.90.870.10">
    <property type="entry name" value="DHBP synthase"/>
    <property type="match status" value="1"/>
</dbReference>
<dbReference type="HAMAP" id="MF_00180">
    <property type="entry name" value="RibB"/>
    <property type="match status" value="1"/>
</dbReference>
<dbReference type="InterPro" id="IPR017945">
    <property type="entry name" value="DHBP_synth_RibB-like_a/b_dom"/>
</dbReference>
<dbReference type="InterPro" id="IPR000422">
    <property type="entry name" value="DHBP_synthase_RibB"/>
</dbReference>
<dbReference type="NCBIfam" id="TIGR00506">
    <property type="entry name" value="ribB"/>
    <property type="match status" value="1"/>
</dbReference>
<dbReference type="PANTHER" id="PTHR21327:SF38">
    <property type="entry name" value="3,4-DIHYDROXY-2-BUTANONE 4-PHOSPHATE SYNTHASE"/>
    <property type="match status" value="1"/>
</dbReference>
<dbReference type="PANTHER" id="PTHR21327">
    <property type="entry name" value="GTP CYCLOHYDROLASE II-RELATED"/>
    <property type="match status" value="1"/>
</dbReference>
<dbReference type="Pfam" id="PF00926">
    <property type="entry name" value="DHBP_synthase"/>
    <property type="match status" value="1"/>
</dbReference>
<dbReference type="SUPFAM" id="SSF55821">
    <property type="entry name" value="YrdC/RibB"/>
    <property type="match status" value="1"/>
</dbReference>
<evidence type="ECO:0000255" key="1">
    <source>
        <dbReference type="HAMAP-Rule" id="MF_00180"/>
    </source>
</evidence>
<sequence length="217" mass="23448">MNQTLLSSFGTAFERVEHALDALREGRGVMVLDDEDRENEGDMIFAAETMTVEQMALTIRHGSGIVCLCLTEERRKQLDLPMMVENNTSAYGTGFTVTIEAAEGVTTGVSAADRVTTVRAAIADGAKPSDLNRPGHVFPLRAQPGGVLTRGGHTEATIDLVTLAGFKPAGVLCELTNDDGTMARAPECIKFAQQHNMAVVTIEDLVAYRREHERKAS</sequence>
<protein>
    <recommendedName>
        <fullName evidence="1">3,4-dihydroxy-2-butanone 4-phosphate synthase</fullName>
        <shortName evidence="1">DHBP synthase</shortName>
        <ecNumber evidence="1">4.1.99.12</ecNumber>
    </recommendedName>
</protein>
<reference key="1">
    <citation type="submission" date="2006-09" db="EMBL/GenBank/DDBJ databases">
        <authorList>
            <consortium name="The Klebsiella pneumonia Genome Sequencing Project"/>
            <person name="McClelland M."/>
            <person name="Sanderson E.K."/>
            <person name="Spieth J."/>
            <person name="Clifton W.S."/>
            <person name="Latreille P."/>
            <person name="Sabo A."/>
            <person name="Pepin K."/>
            <person name="Bhonagiri V."/>
            <person name="Porwollik S."/>
            <person name="Ali J."/>
            <person name="Wilson R.K."/>
        </authorList>
    </citation>
    <scope>NUCLEOTIDE SEQUENCE [LARGE SCALE GENOMIC DNA]</scope>
    <source>
        <strain>ATCC 700721 / MGH 78578</strain>
    </source>
</reference>
<keyword id="KW-0456">Lyase</keyword>
<keyword id="KW-0460">Magnesium</keyword>
<keyword id="KW-0464">Manganese</keyword>
<keyword id="KW-0479">Metal-binding</keyword>
<keyword id="KW-0686">Riboflavin biosynthesis</keyword>
<feature type="chain" id="PRO_1000040614" description="3,4-dihydroxy-2-butanone 4-phosphate synthase">
    <location>
        <begin position="1"/>
        <end position="217"/>
    </location>
</feature>
<feature type="binding site" evidence="1">
    <location>
        <begin position="37"/>
        <end position="38"/>
    </location>
    <ligand>
        <name>D-ribulose 5-phosphate</name>
        <dbReference type="ChEBI" id="CHEBI:58121"/>
    </ligand>
</feature>
<feature type="binding site" evidence="1">
    <location>
        <position position="38"/>
    </location>
    <ligand>
        <name>Mg(2+)</name>
        <dbReference type="ChEBI" id="CHEBI:18420"/>
        <label>1</label>
    </ligand>
</feature>
<feature type="binding site" evidence="1">
    <location>
        <position position="38"/>
    </location>
    <ligand>
        <name>Mg(2+)</name>
        <dbReference type="ChEBI" id="CHEBI:18420"/>
        <label>2</label>
    </ligand>
</feature>
<feature type="binding site" evidence="1">
    <location>
        <position position="42"/>
    </location>
    <ligand>
        <name>D-ribulose 5-phosphate</name>
        <dbReference type="ChEBI" id="CHEBI:58121"/>
    </ligand>
</feature>
<feature type="binding site" evidence="1">
    <location>
        <begin position="150"/>
        <end position="154"/>
    </location>
    <ligand>
        <name>D-ribulose 5-phosphate</name>
        <dbReference type="ChEBI" id="CHEBI:58121"/>
    </ligand>
</feature>
<feature type="binding site" evidence="1">
    <location>
        <position position="153"/>
    </location>
    <ligand>
        <name>Mg(2+)</name>
        <dbReference type="ChEBI" id="CHEBI:18420"/>
        <label>2</label>
    </ligand>
</feature>
<feature type="binding site" evidence="1">
    <location>
        <position position="174"/>
    </location>
    <ligand>
        <name>D-ribulose 5-phosphate</name>
        <dbReference type="ChEBI" id="CHEBI:58121"/>
    </ligand>
</feature>
<feature type="site" description="Essential for catalytic activity" evidence="1">
    <location>
        <position position="136"/>
    </location>
</feature>
<feature type="site" description="Essential for catalytic activity" evidence="1">
    <location>
        <position position="174"/>
    </location>
</feature>
<name>RIBB_KLEP7</name>